<organism>
    <name type="scientific">Acetivibrio thermocellus (strain ATCC 27405 / DSM 1237 / JCM 9322 / NBRC 103400 / NCIMB 10682 / NRRL B-4536 / VPI 7372)</name>
    <name type="common">Clostridium thermocellum</name>
    <dbReference type="NCBI Taxonomy" id="203119"/>
    <lineage>
        <taxon>Bacteria</taxon>
        <taxon>Bacillati</taxon>
        <taxon>Bacillota</taxon>
        <taxon>Clostridia</taxon>
        <taxon>Eubacteriales</taxon>
        <taxon>Oscillospiraceae</taxon>
        <taxon>Acetivibrio</taxon>
    </lineage>
</organism>
<evidence type="ECO:0000255" key="1">
    <source>
        <dbReference type="HAMAP-Rule" id="MF_00412"/>
    </source>
</evidence>
<comment type="function">
    <text evidence="1">Catalyzes the NADPH-dependent reduction of L-glutamate 5-phosphate into L-glutamate 5-semialdehyde and phosphate. The product spontaneously undergoes cyclization to form 1-pyrroline-5-carboxylate.</text>
</comment>
<comment type="catalytic activity">
    <reaction evidence="1">
        <text>L-glutamate 5-semialdehyde + phosphate + NADP(+) = L-glutamyl 5-phosphate + NADPH + H(+)</text>
        <dbReference type="Rhea" id="RHEA:19541"/>
        <dbReference type="ChEBI" id="CHEBI:15378"/>
        <dbReference type="ChEBI" id="CHEBI:43474"/>
        <dbReference type="ChEBI" id="CHEBI:57783"/>
        <dbReference type="ChEBI" id="CHEBI:58066"/>
        <dbReference type="ChEBI" id="CHEBI:58274"/>
        <dbReference type="ChEBI" id="CHEBI:58349"/>
        <dbReference type="EC" id="1.2.1.41"/>
    </reaction>
</comment>
<comment type="pathway">
    <text evidence="1">Amino-acid biosynthesis; L-proline biosynthesis; L-glutamate 5-semialdehyde from L-glutamate: step 2/2.</text>
</comment>
<comment type="subcellular location">
    <subcellularLocation>
        <location evidence="1">Cytoplasm</location>
    </subcellularLocation>
</comment>
<comment type="similarity">
    <text evidence="1">Belongs to the gamma-glutamyl phosphate reductase family.</text>
</comment>
<keyword id="KW-0028">Amino-acid biosynthesis</keyword>
<keyword id="KW-0963">Cytoplasm</keyword>
<keyword id="KW-0521">NADP</keyword>
<keyword id="KW-0560">Oxidoreductase</keyword>
<keyword id="KW-0641">Proline biosynthesis</keyword>
<keyword id="KW-1185">Reference proteome</keyword>
<sequence>MSISEMAFQVKEASIRLAAAGTELKNKALENIARLLMERKDEIIKANNEDLQRSREEKLAEPLLKRLKFDEAKIVDVIDGINSLIKLEDPVGKTLLSTELDEGLELYRVTCPIGVVGIIFESRPDALVQISTLCLKSGNGVLLKGGSEARETNKILAQIITEATEEVGIPPNWIKLLETRADVNEMLKMDKYIDLIIPRGSNEFVRYIMDNSRIPVMGHADGICHCYIDEDADIDMAIRIVVDSKTQYVAVCNATETLLVHKNIAPKVLPELKRALDSKNVELVGCSETQKIIPVAPATEEDWRTEYLDYKLSVKVVGDLEEAIEHINTYGSGHTDSIITNSKEKAAAFMSLVDSGNVFWNCSTRFSDGFRYGFGAEVGISTSKIHARGPVGLDGLLIYKYKLIGNGHIVEDYAKRTKSFKHNKMNKQFPL</sequence>
<dbReference type="EC" id="1.2.1.41" evidence="1"/>
<dbReference type="EMBL" id="CP000568">
    <property type="protein sequence ID" value="ABN51501.1"/>
    <property type="molecule type" value="Genomic_DNA"/>
</dbReference>
<dbReference type="RefSeq" id="WP_003512405.1">
    <property type="nucleotide sequence ID" value="NC_009012.1"/>
</dbReference>
<dbReference type="SMR" id="A3DC22"/>
<dbReference type="STRING" id="203119.Cthe_0262"/>
<dbReference type="GeneID" id="35804648"/>
<dbReference type="KEGG" id="cth:Cthe_0262"/>
<dbReference type="eggNOG" id="COG0014">
    <property type="taxonomic scope" value="Bacteria"/>
</dbReference>
<dbReference type="HOGENOM" id="CLU_030231_0_1_9"/>
<dbReference type="OrthoDB" id="9809970at2"/>
<dbReference type="UniPathway" id="UPA00098">
    <property type="reaction ID" value="UER00360"/>
</dbReference>
<dbReference type="Proteomes" id="UP000002145">
    <property type="component" value="Chromosome"/>
</dbReference>
<dbReference type="GO" id="GO:0005737">
    <property type="term" value="C:cytoplasm"/>
    <property type="evidence" value="ECO:0007669"/>
    <property type="project" value="UniProtKB-SubCell"/>
</dbReference>
<dbReference type="GO" id="GO:0004350">
    <property type="term" value="F:glutamate-5-semialdehyde dehydrogenase activity"/>
    <property type="evidence" value="ECO:0007669"/>
    <property type="project" value="UniProtKB-UniRule"/>
</dbReference>
<dbReference type="GO" id="GO:0050661">
    <property type="term" value="F:NADP binding"/>
    <property type="evidence" value="ECO:0007669"/>
    <property type="project" value="InterPro"/>
</dbReference>
<dbReference type="GO" id="GO:0055129">
    <property type="term" value="P:L-proline biosynthetic process"/>
    <property type="evidence" value="ECO:0007669"/>
    <property type="project" value="UniProtKB-UniRule"/>
</dbReference>
<dbReference type="CDD" id="cd07079">
    <property type="entry name" value="ALDH_F18-19_ProA-GPR"/>
    <property type="match status" value="1"/>
</dbReference>
<dbReference type="FunFam" id="3.40.309.10:FF:000006">
    <property type="entry name" value="Gamma-glutamyl phosphate reductase"/>
    <property type="match status" value="1"/>
</dbReference>
<dbReference type="Gene3D" id="3.40.605.10">
    <property type="entry name" value="Aldehyde Dehydrogenase, Chain A, domain 1"/>
    <property type="match status" value="1"/>
</dbReference>
<dbReference type="Gene3D" id="3.40.309.10">
    <property type="entry name" value="Aldehyde Dehydrogenase, Chain A, domain 2"/>
    <property type="match status" value="1"/>
</dbReference>
<dbReference type="HAMAP" id="MF_00412">
    <property type="entry name" value="ProA"/>
    <property type="match status" value="1"/>
</dbReference>
<dbReference type="InterPro" id="IPR016161">
    <property type="entry name" value="Ald_DH/histidinol_DH"/>
</dbReference>
<dbReference type="InterPro" id="IPR016163">
    <property type="entry name" value="Ald_DH_C"/>
</dbReference>
<dbReference type="InterPro" id="IPR016162">
    <property type="entry name" value="Ald_DH_N"/>
</dbReference>
<dbReference type="InterPro" id="IPR015590">
    <property type="entry name" value="Aldehyde_DH_dom"/>
</dbReference>
<dbReference type="InterPro" id="IPR020593">
    <property type="entry name" value="G-glutamylP_reductase_CS"/>
</dbReference>
<dbReference type="InterPro" id="IPR012134">
    <property type="entry name" value="Glu-5-SA_DH"/>
</dbReference>
<dbReference type="InterPro" id="IPR000965">
    <property type="entry name" value="GPR_dom"/>
</dbReference>
<dbReference type="NCBIfam" id="NF001221">
    <property type="entry name" value="PRK00197.1"/>
    <property type="match status" value="1"/>
</dbReference>
<dbReference type="NCBIfam" id="TIGR00407">
    <property type="entry name" value="proA"/>
    <property type="match status" value="1"/>
</dbReference>
<dbReference type="PANTHER" id="PTHR11063:SF8">
    <property type="entry name" value="DELTA-1-PYRROLINE-5-CARBOXYLATE SYNTHASE"/>
    <property type="match status" value="1"/>
</dbReference>
<dbReference type="PANTHER" id="PTHR11063">
    <property type="entry name" value="GLUTAMATE SEMIALDEHYDE DEHYDROGENASE"/>
    <property type="match status" value="1"/>
</dbReference>
<dbReference type="Pfam" id="PF00171">
    <property type="entry name" value="Aldedh"/>
    <property type="match status" value="2"/>
</dbReference>
<dbReference type="PIRSF" id="PIRSF000151">
    <property type="entry name" value="GPR"/>
    <property type="match status" value="1"/>
</dbReference>
<dbReference type="SUPFAM" id="SSF53720">
    <property type="entry name" value="ALDH-like"/>
    <property type="match status" value="1"/>
</dbReference>
<dbReference type="PROSITE" id="PS01223">
    <property type="entry name" value="PROA"/>
    <property type="match status" value="1"/>
</dbReference>
<feature type="chain" id="PRO_0000340879" description="Gamma-glutamyl phosphate reductase">
    <location>
        <begin position="1"/>
        <end position="431"/>
    </location>
</feature>
<proteinExistence type="inferred from homology"/>
<protein>
    <recommendedName>
        <fullName evidence="1">Gamma-glutamyl phosphate reductase</fullName>
        <shortName evidence="1">GPR</shortName>
        <ecNumber evidence="1">1.2.1.41</ecNumber>
    </recommendedName>
    <alternativeName>
        <fullName evidence="1">Glutamate-5-semialdehyde dehydrogenase</fullName>
    </alternativeName>
    <alternativeName>
        <fullName evidence="1">Glutamyl-gamma-semialdehyde dehydrogenase</fullName>
        <shortName evidence="1">GSA dehydrogenase</shortName>
    </alternativeName>
</protein>
<accession>A3DC22</accession>
<name>PROA_ACET2</name>
<gene>
    <name evidence="1" type="primary">proA</name>
    <name type="ordered locus">Cthe_0262</name>
</gene>
<reference key="1">
    <citation type="submission" date="2007-02" db="EMBL/GenBank/DDBJ databases">
        <title>Complete sequence of Clostridium thermocellum ATCC 27405.</title>
        <authorList>
            <consortium name="US DOE Joint Genome Institute"/>
            <person name="Copeland A."/>
            <person name="Lucas S."/>
            <person name="Lapidus A."/>
            <person name="Barry K."/>
            <person name="Detter J.C."/>
            <person name="Glavina del Rio T."/>
            <person name="Hammon N."/>
            <person name="Israni S."/>
            <person name="Dalin E."/>
            <person name="Tice H."/>
            <person name="Pitluck S."/>
            <person name="Chertkov O."/>
            <person name="Brettin T."/>
            <person name="Bruce D."/>
            <person name="Han C."/>
            <person name="Tapia R."/>
            <person name="Gilna P."/>
            <person name="Schmutz J."/>
            <person name="Larimer F."/>
            <person name="Land M."/>
            <person name="Hauser L."/>
            <person name="Kyrpides N."/>
            <person name="Mikhailova N."/>
            <person name="Wu J.H.D."/>
            <person name="Newcomb M."/>
            <person name="Richardson P."/>
        </authorList>
    </citation>
    <scope>NUCLEOTIDE SEQUENCE [LARGE SCALE GENOMIC DNA]</scope>
    <source>
        <strain>ATCC 27405 / DSM 1237 / JCM 9322 / NBRC 103400 / NCIMB 10682 / NRRL B-4536 / VPI 7372</strain>
    </source>
</reference>